<comment type="catalytic activity">
    <reaction evidence="1">
        <text>tRNA(Asn) + L-asparagine + ATP = L-asparaginyl-tRNA(Asn) + AMP + diphosphate + H(+)</text>
        <dbReference type="Rhea" id="RHEA:11180"/>
        <dbReference type="Rhea" id="RHEA-COMP:9659"/>
        <dbReference type="Rhea" id="RHEA-COMP:9674"/>
        <dbReference type="ChEBI" id="CHEBI:15378"/>
        <dbReference type="ChEBI" id="CHEBI:30616"/>
        <dbReference type="ChEBI" id="CHEBI:33019"/>
        <dbReference type="ChEBI" id="CHEBI:58048"/>
        <dbReference type="ChEBI" id="CHEBI:78442"/>
        <dbReference type="ChEBI" id="CHEBI:78515"/>
        <dbReference type="ChEBI" id="CHEBI:456215"/>
        <dbReference type="EC" id="6.1.1.22"/>
    </reaction>
</comment>
<comment type="subunit">
    <text evidence="1">Homodimer.</text>
</comment>
<comment type="subcellular location">
    <subcellularLocation>
        <location evidence="1">Cytoplasm</location>
    </subcellularLocation>
</comment>
<comment type="similarity">
    <text evidence="1">Belongs to the class-II aminoacyl-tRNA synthetase family.</text>
</comment>
<accession>P47359</accession>
<evidence type="ECO:0000255" key="1">
    <source>
        <dbReference type="HAMAP-Rule" id="MF_00534"/>
    </source>
</evidence>
<name>SYN_MYCGE</name>
<gene>
    <name evidence="1" type="primary">asnS</name>
    <name type="ordered locus">MG113</name>
</gene>
<sequence>MKSVTVKQLLQTPRKFNNKQIKLSGWVKNKRASANIIFLAISDGSSINTLQAVVKQEDNPQVFSLLQTVNLASAVMVWGEIILTPKAKQPLELKLKQVSLLAQAESDYPLQKKEHSQEFFRSNAHLRVRAKTYFAVMKIRSVLSHAIFEYFFKNDFILVQSPILTSNDCEGAGETFVIKDSETFFNKTTFLTVSGQFGAEAFAQAFKKVFTFGPTFRAEKSHTNRHLSEFWMIEPEIAFANLKDLMQLIQNLIKFLIKKVMENASDELNVLAKQFSNDIISNLKTIISTKKFPIIEYSKALAILKESSDTKKTNFELNDFSFGIDLKTEHERFLCEQYFQNQPLFVINYPKELKAFYMKTNTDNKTVAAVDLLLPKIGEICGGSERESDLNQLKNRCQSLNIDTKSLNWYLDMRKWGYFASAGFGLGFDRLLAYICGLENIRDAIPFPRVHGTINF</sequence>
<keyword id="KW-0030">Aminoacyl-tRNA synthetase</keyword>
<keyword id="KW-0067">ATP-binding</keyword>
<keyword id="KW-0963">Cytoplasm</keyword>
<keyword id="KW-0436">Ligase</keyword>
<keyword id="KW-0547">Nucleotide-binding</keyword>
<keyword id="KW-0648">Protein biosynthesis</keyword>
<keyword id="KW-1185">Reference proteome</keyword>
<dbReference type="EC" id="6.1.1.22" evidence="1"/>
<dbReference type="EMBL" id="L43967">
    <property type="protein sequence ID" value="AAC71331.1"/>
    <property type="molecule type" value="Genomic_DNA"/>
</dbReference>
<dbReference type="EMBL" id="U01692">
    <property type="protein sequence ID" value="AAB01005.1"/>
    <property type="molecule type" value="Genomic_DNA"/>
</dbReference>
<dbReference type="PIR" id="E64212">
    <property type="entry name" value="E64212"/>
</dbReference>
<dbReference type="RefSeq" id="WP_009885670.1">
    <property type="nucleotide sequence ID" value="NC_000908.2"/>
</dbReference>
<dbReference type="SMR" id="P47359"/>
<dbReference type="FunCoup" id="P47359">
    <property type="interactions" value="174"/>
</dbReference>
<dbReference type="STRING" id="243273.MG_113"/>
<dbReference type="GeneID" id="88282237"/>
<dbReference type="KEGG" id="mge:MG_113"/>
<dbReference type="eggNOG" id="COG0017">
    <property type="taxonomic scope" value="Bacteria"/>
</dbReference>
<dbReference type="HOGENOM" id="CLU_004553_2_0_14"/>
<dbReference type="InParanoid" id="P47359"/>
<dbReference type="OrthoDB" id="9762036at2"/>
<dbReference type="BioCyc" id="MGEN243273:G1GJ2-126-MONOMER"/>
<dbReference type="Proteomes" id="UP000000807">
    <property type="component" value="Chromosome"/>
</dbReference>
<dbReference type="GO" id="GO:0005737">
    <property type="term" value="C:cytoplasm"/>
    <property type="evidence" value="ECO:0007669"/>
    <property type="project" value="UniProtKB-SubCell"/>
</dbReference>
<dbReference type="GO" id="GO:0004816">
    <property type="term" value="F:asparagine-tRNA ligase activity"/>
    <property type="evidence" value="ECO:0007669"/>
    <property type="project" value="UniProtKB-UniRule"/>
</dbReference>
<dbReference type="GO" id="GO:0005524">
    <property type="term" value="F:ATP binding"/>
    <property type="evidence" value="ECO:0007669"/>
    <property type="project" value="UniProtKB-UniRule"/>
</dbReference>
<dbReference type="GO" id="GO:0003676">
    <property type="term" value="F:nucleic acid binding"/>
    <property type="evidence" value="ECO:0007669"/>
    <property type="project" value="InterPro"/>
</dbReference>
<dbReference type="GO" id="GO:0006421">
    <property type="term" value="P:asparaginyl-tRNA aminoacylation"/>
    <property type="evidence" value="ECO:0000318"/>
    <property type="project" value="GO_Central"/>
</dbReference>
<dbReference type="CDD" id="cd00776">
    <property type="entry name" value="AsxRS_core"/>
    <property type="match status" value="1"/>
</dbReference>
<dbReference type="CDD" id="cd04318">
    <property type="entry name" value="EcAsnRS_like_N"/>
    <property type="match status" value="1"/>
</dbReference>
<dbReference type="FunFam" id="3.30.930.10:FF:000016">
    <property type="entry name" value="Asparagine--tRNA ligase"/>
    <property type="match status" value="1"/>
</dbReference>
<dbReference type="Gene3D" id="3.30.930.10">
    <property type="entry name" value="Bira Bifunctional Protein, Domain 2"/>
    <property type="match status" value="1"/>
</dbReference>
<dbReference type="Gene3D" id="2.40.50.140">
    <property type="entry name" value="Nucleic acid-binding proteins"/>
    <property type="match status" value="1"/>
</dbReference>
<dbReference type="HAMAP" id="MF_00534">
    <property type="entry name" value="Asn_tRNA_synth"/>
    <property type="match status" value="1"/>
</dbReference>
<dbReference type="InterPro" id="IPR004364">
    <property type="entry name" value="Aa-tRNA-synt_II"/>
</dbReference>
<dbReference type="InterPro" id="IPR006195">
    <property type="entry name" value="aa-tRNA-synth_II"/>
</dbReference>
<dbReference type="InterPro" id="IPR045864">
    <property type="entry name" value="aa-tRNA-synth_II/BPL/LPL"/>
</dbReference>
<dbReference type="InterPro" id="IPR004522">
    <property type="entry name" value="Asn-tRNA-ligase"/>
</dbReference>
<dbReference type="InterPro" id="IPR002312">
    <property type="entry name" value="Asp/Asn-tRNA-synth_IIb"/>
</dbReference>
<dbReference type="InterPro" id="IPR012340">
    <property type="entry name" value="NA-bd_OB-fold"/>
</dbReference>
<dbReference type="InterPro" id="IPR004365">
    <property type="entry name" value="NA-bd_OB_tRNA"/>
</dbReference>
<dbReference type="NCBIfam" id="TIGR00457">
    <property type="entry name" value="asnS"/>
    <property type="match status" value="1"/>
</dbReference>
<dbReference type="NCBIfam" id="NF003037">
    <property type="entry name" value="PRK03932.1"/>
    <property type="match status" value="1"/>
</dbReference>
<dbReference type="PANTHER" id="PTHR22594:SF34">
    <property type="entry name" value="ASPARAGINE--TRNA LIGASE, MITOCHONDRIAL-RELATED"/>
    <property type="match status" value="1"/>
</dbReference>
<dbReference type="PANTHER" id="PTHR22594">
    <property type="entry name" value="ASPARTYL/LYSYL-TRNA SYNTHETASE"/>
    <property type="match status" value="1"/>
</dbReference>
<dbReference type="Pfam" id="PF00152">
    <property type="entry name" value="tRNA-synt_2"/>
    <property type="match status" value="1"/>
</dbReference>
<dbReference type="Pfam" id="PF01336">
    <property type="entry name" value="tRNA_anti-codon"/>
    <property type="match status" value="1"/>
</dbReference>
<dbReference type="PRINTS" id="PR01042">
    <property type="entry name" value="TRNASYNTHASP"/>
</dbReference>
<dbReference type="SUPFAM" id="SSF55681">
    <property type="entry name" value="Class II aaRS and biotin synthetases"/>
    <property type="match status" value="1"/>
</dbReference>
<dbReference type="SUPFAM" id="SSF50249">
    <property type="entry name" value="Nucleic acid-binding proteins"/>
    <property type="match status" value="1"/>
</dbReference>
<dbReference type="PROSITE" id="PS50862">
    <property type="entry name" value="AA_TRNA_LIGASE_II"/>
    <property type="match status" value="1"/>
</dbReference>
<protein>
    <recommendedName>
        <fullName evidence="1">Asparagine--tRNA ligase</fullName>
        <ecNumber evidence="1">6.1.1.22</ecNumber>
    </recommendedName>
    <alternativeName>
        <fullName evidence="1">Asparaginyl-tRNA synthetase</fullName>
        <shortName evidence="1">AsnRS</shortName>
    </alternativeName>
</protein>
<reference key="1">
    <citation type="journal article" date="1995" name="Science">
        <title>The minimal gene complement of Mycoplasma genitalium.</title>
        <authorList>
            <person name="Fraser C.M."/>
            <person name="Gocayne J.D."/>
            <person name="White O."/>
            <person name="Adams M.D."/>
            <person name="Clayton R.A."/>
            <person name="Fleischmann R.D."/>
            <person name="Bult C.J."/>
            <person name="Kerlavage A.R."/>
            <person name="Sutton G.G."/>
            <person name="Kelley J.M."/>
            <person name="Fritchman J.L."/>
            <person name="Weidman J.F."/>
            <person name="Small K.V."/>
            <person name="Sandusky M."/>
            <person name="Fuhrmann J.L."/>
            <person name="Nguyen D.T."/>
            <person name="Utterback T.R."/>
            <person name="Saudek D.M."/>
            <person name="Phillips C.A."/>
            <person name="Merrick J.M."/>
            <person name="Tomb J.-F."/>
            <person name="Dougherty B.A."/>
            <person name="Bott K.F."/>
            <person name="Hu P.-C."/>
            <person name="Lucier T.S."/>
            <person name="Peterson S.N."/>
            <person name="Smith H.O."/>
            <person name="Hutchison C.A. III"/>
            <person name="Venter J.C."/>
        </authorList>
    </citation>
    <scope>NUCLEOTIDE SEQUENCE [LARGE SCALE GENOMIC DNA]</scope>
    <source>
        <strain>ATCC 33530 / DSM 19775 / NCTC 10195 / G37</strain>
    </source>
</reference>
<reference key="2">
    <citation type="journal article" date="1993" name="J. Bacteriol.">
        <title>A survey of the Mycoplasma genitalium genome by using random sequencing.</title>
        <authorList>
            <person name="Peterson S.N."/>
            <person name="Hu P.-C."/>
            <person name="Bott K.F."/>
            <person name="Hutchison C.A. III"/>
        </authorList>
    </citation>
    <scope>NUCLEOTIDE SEQUENCE [GENOMIC DNA] OF 315-410</scope>
    <source>
        <strain>ATCC 33530 / DSM 19775 / NCTC 10195 / G37</strain>
    </source>
</reference>
<organism>
    <name type="scientific">Mycoplasma genitalium (strain ATCC 33530 / DSM 19775 / NCTC 10195 / G37)</name>
    <name type="common">Mycoplasmoides genitalium</name>
    <dbReference type="NCBI Taxonomy" id="243273"/>
    <lineage>
        <taxon>Bacteria</taxon>
        <taxon>Bacillati</taxon>
        <taxon>Mycoplasmatota</taxon>
        <taxon>Mycoplasmoidales</taxon>
        <taxon>Mycoplasmoidaceae</taxon>
        <taxon>Mycoplasmoides</taxon>
    </lineage>
</organism>
<proteinExistence type="inferred from homology"/>
<feature type="chain" id="PRO_0000176428" description="Asparagine--tRNA ligase">
    <location>
        <begin position="1"/>
        <end position="456"/>
    </location>
</feature>